<sequence>MARKTKQEAQETRQHILDVALRLFSQQGVSSTSLGEIAKAAGVTRGAIYWHFKDKSDLFSEIWELSESNIGELELEYQAKFPGDPLSVLREILIHVLESTVTEERRRLLMEIIFHKCEFVGEMAVVQQAQRNLCLESYDRIEQTLKHCIEAKMLPADLMTRRAAIIMRGYISGLMENWLFAPQSFDLKKEARDYVAILLEMYLLCPTLRNPATNE</sequence>
<evidence type="ECO:0000250" key="1"/>
<evidence type="ECO:0000255" key="2">
    <source>
        <dbReference type="PROSITE-ProRule" id="PRU00335"/>
    </source>
</evidence>
<dbReference type="EMBL" id="AE005674">
    <property type="protein sequence ID" value="AAN42064.1"/>
    <property type="molecule type" value="Genomic_DNA"/>
</dbReference>
<dbReference type="EMBL" id="AE014073">
    <property type="protein sequence ID" value="AAP15941.1"/>
    <property type="molecule type" value="Genomic_DNA"/>
</dbReference>
<dbReference type="RefSeq" id="NP_706357.1">
    <property type="nucleotide sequence ID" value="NC_004337.2"/>
</dbReference>
<dbReference type="RefSeq" id="WP_000101737.1">
    <property type="nucleotide sequence ID" value="NZ_WPGW01000015.1"/>
</dbReference>
<dbReference type="SMR" id="P0ACT1"/>
<dbReference type="STRING" id="198214.SF0409"/>
<dbReference type="PaxDb" id="198214-SF0409"/>
<dbReference type="GeneID" id="1027719"/>
<dbReference type="GeneID" id="93776986"/>
<dbReference type="KEGG" id="sfl:SF0409"/>
<dbReference type="KEGG" id="sfx:S0416"/>
<dbReference type="PATRIC" id="fig|198214.7.peg.469"/>
<dbReference type="HOGENOM" id="CLU_069356_12_3_6"/>
<dbReference type="Proteomes" id="UP000001006">
    <property type="component" value="Chromosome"/>
</dbReference>
<dbReference type="Proteomes" id="UP000002673">
    <property type="component" value="Chromosome"/>
</dbReference>
<dbReference type="GO" id="GO:0003677">
    <property type="term" value="F:DNA binding"/>
    <property type="evidence" value="ECO:0007669"/>
    <property type="project" value="UniProtKB-KW"/>
</dbReference>
<dbReference type="FunFam" id="1.10.357.10:FF:000003">
    <property type="entry name" value="HTH-type transcriptional regulator AcrR"/>
    <property type="match status" value="1"/>
</dbReference>
<dbReference type="Gene3D" id="1.10.357.10">
    <property type="entry name" value="Tetracycline Repressor, domain 2"/>
    <property type="match status" value="1"/>
</dbReference>
<dbReference type="InterPro" id="IPR023772">
    <property type="entry name" value="DNA-bd_HTH_TetR-type_CS"/>
</dbReference>
<dbReference type="InterPro" id="IPR009057">
    <property type="entry name" value="Homeodomain-like_sf"/>
</dbReference>
<dbReference type="InterPro" id="IPR050624">
    <property type="entry name" value="HTH-type_Tx_Regulator"/>
</dbReference>
<dbReference type="InterPro" id="IPR001647">
    <property type="entry name" value="HTH_TetR"/>
</dbReference>
<dbReference type="InterPro" id="IPR036271">
    <property type="entry name" value="Tet_transcr_reg_TetR-rel_C_sf"/>
</dbReference>
<dbReference type="InterPro" id="IPR013572">
    <property type="entry name" value="Tscrpt_reg_MAATS_C"/>
</dbReference>
<dbReference type="NCBIfam" id="NF007949">
    <property type="entry name" value="PRK10668.1"/>
    <property type="match status" value="1"/>
</dbReference>
<dbReference type="PANTHER" id="PTHR43479">
    <property type="entry name" value="ACREF/ENVCD OPERON REPRESSOR-RELATED"/>
    <property type="match status" value="1"/>
</dbReference>
<dbReference type="PANTHER" id="PTHR43479:SF11">
    <property type="entry name" value="ACREF_ENVCD OPERON REPRESSOR-RELATED"/>
    <property type="match status" value="1"/>
</dbReference>
<dbReference type="Pfam" id="PF08361">
    <property type="entry name" value="TetR_C_2"/>
    <property type="match status" value="1"/>
</dbReference>
<dbReference type="Pfam" id="PF00440">
    <property type="entry name" value="TetR_N"/>
    <property type="match status" value="1"/>
</dbReference>
<dbReference type="PRINTS" id="PR00455">
    <property type="entry name" value="HTHTETR"/>
</dbReference>
<dbReference type="SUPFAM" id="SSF46689">
    <property type="entry name" value="Homeodomain-like"/>
    <property type="match status" value="1"/>
</dbReference>
<dbReference type="SUPFAM" id="SSF48498">
    <property type="entry name" value="Tetracyclin repressor-like, C-terminal domain"/>
    <property type="match status" value="1"/>
</dbReference>
<dbReference type="PROSITE" id="PS01081">
    <property type="entry name" value="HTH_TETR_1"/>
    <property type="match status" value="1"/>
</dbReference>
<dbReference type="PROSITE" id="PS50977">
    <property type="entry name" value="HTH_TETR_2"/>
    <property type="match status" value="1"/>
</dbReference>
<gene>
    <name type="primary">acrR</name>
    <name type="ordered locus">SF0409</name>
    <name type="ordered locus">S0416</name>
</gene>
<keyword id="KW-0238">DNA-binding</keyword>
<keyword id="KW-1185">Reference proteome</keyword>
<keyword id="KW-0678">Repressor</keyword>
<keyword id="KW-0804">Transcription</keyword>
<keyword id="KW-0805">Transcription regulation</keyword>
<protein>
    <recommendedName>
        <fullName>HTH-type transcriptional regulator AcrR</fullName>
    </recommendedName>
    <alternativeName>
        <fullName>Potential acrAB operon repressor</fullName>
    </alternativeName>
</protein>
<comment type="function">
    <text evidence="1">Potential regulator protein for the acrAB genes.</text>
</comment>
<organism>
    <name type="scientific">Shigella flexneri</name>
    <dbReference type="NCBI Taxonomy" id="623"/>
    <lineage>
        <taxon>Bacteria</taxon>
        <taxon>Pseudomonadati</taxon>
        <taxon>Pseudomonadota</taxon>
        <taxon>Gammaproteobacteria</taxon>
        <taxon>Enterobacterales</taxon>
        <taxon>Enterobacteriaceae</taxon>
        <taxon>Shigella</taxon>
    </lineage>
</organism>
<feature type="chain" id="PRO_0000070575" description="HTH-type transcriptional regulator AcrR">
    <location>
        <begin position="1"/>
        <end position="215"/>
    </location>
</feature>
<feature type="domain" description="HTH tetR-type" evidence="2">
    <location>
        <begin position="10"/>
        <end position="70"/>
    </location>
</feature>
<feature type="DNA-binding region" description="H-T-H motif" evidence="2">
    <location>
        <begin position="33"/>
        <end position="52"/>
    </location>
</feature>
<proteinExistence type="inferred from homology"/>
<accession>P0ACT1</accession>
<accession>P34000</accession>
<name>ACRR_SHIFL</name>
<reference key="1">
    <citation type="journal article" date="2002" name="Nucleic Acids Res.">
        <title>Genome sequence of Shigella flexneri 2a: insights into pathogenicity through comparison with genomes of Escherichia coli K12 and O157.</title>
        <authorList>
            <person name="Jin Q."/>
            <person name="Yuan Z."/>
            <person name="Xu J."/>
            <person name="Wang Y."/>
            <person name="Shen Y."/>
            <person name="Lu W."/>
            <person name="Wang J."/>
            <person name="Liu H."/>
            <person name="Yang J."/>
            <person name="Yang F."/>
            <person name="Zhang X."/>
            <person name="Zhang J."/>
            <person name="Yang G."/>
            <person name="Wu H."/>
            <person name="Qu D."/>
            <person name="Dong J."/>
            <person name="Sun L."/>
            <person name="Xue Y."/>
            <person name="Zhao A."/>
            <person name="Gao Y."/>
            <person name="Zhu J."/>
            <person name="Kan B."/>
            <person name="Ding K."/>
            <person name="Chen S."/>
            <person name="Cheng H."/>
            <person name="Yao Z."/>
            <person name="He B."/>
            <person name="Chen R."/>
            <person name="Ma D."/>
            <person name="Qiang B."/>
            <person name="Wen Y."/>
            <person name="Hou Y."/>
            <person name="Yu J."/>
        </authorList>
    </citation>
    <scope>NUCLEOTIDE SEQUENCE [LARGE SCALE GENOMIC DNA]</scope>
    <source>
        <strain>301 / Serotype 2a</strain>
    </source>
</reference>
<reference key="2">
    <citation type="journal article" date="2003" name="Infect. Immun.">
        <title>Complete genome sequence and comparative genomics of Shigella flexneri serotype 2a strain 2457T.</title>
        <authorList>
            <person name="Wei J."/>
            <person name="Goldberg M.B."/>
            <person name="Burland V."/>
            <person name="Venkatesan M.M."/>
            <person name="Deng W."/>
            <person name="Fournier G."/>
            <person name="Mayhew G.F."/>
            <person name="Plunkett G. III"/>
            <person name="Rose D.J."/>
            <person name="Darling A."/>
            <person name="Mau B."/>
            <person name="Perna N.T."/>
            <person name="Payne S.M."/>
            <person name="Runyen-Janecky L.J."/>
            <person name="Zhou S."/>
            <person name="Schwartz D.C."/>
            <person name="Blattner F.R."/>
        </authorList>
    </citation>
    <scope>NUCLEOTIDE SEQUENCE [LARGE SCALE GENOMIC DNA]</scope>
    <source>
        <strain>ATCC 700930 / 2457T / Serotype 2a</strain>
    </source>
</reference>